<protein>
    <recommendedName>
        <fullName evidence="1">GMP synthase [glutamine-hydrolyzing]</fullName>
        <ecNumber evidence="1">6.3.5.2</ecNumber>
    </recommendedName>
    <alternativeName>
        <fullName evidence="1">GMP synthetase</fullName>
    </alternativeName>
    <alternativeName>
        <fullName evidence="1">Glutamine amidotransferase</fullName>
    </alternativeName>
</protein>
<reference key="1">
    <citation type="submission" date="2008-06" db="EMBL/GenBank/DDBJ databases">
        <title>Complete sequence of Pelodictyon phaeoclathratiforme BU-1.</title>
        <authorList>
            <consortium name="US DOE Joint Genome Institute"/>
            <person name="Lucas S."/>
            <person name="Copeland A."/>
            <person name="Lapidus A."/>
            <person name="Glavina del Rio T."/>
            <person name="Dalin E."/>
            <person name="Tice H."/>
            <person name="Bruce D."/>
            <person name="Goodwin L."/>
            <person name="Pitluck S."/>
            <person name="Schmutz J."/>
            <person name="Larimer F."/>
            <person name="Land M."/>
            <person name="Hauser L."/>
            <person name="Kyrpides N."/>
            <person name="Mikhailova N."/>
            <person name="Liu Z."/>
            <person name="Li T."/>
            <person name="Zhao F."/>
            <person name="Overmann J."/>
            <person name="Bryant D.A."/>
            <person name="Richardson P."/>
        </authorList>
    </citation>
    <scope>NUCLEOTIDE SEQUENCE [LARGE SCALE GENOMIC DNA]</scope>
    <source>
        <strain>DSM 5477 / BU-1</strain>
    </source>
</reference>
<name>GUAA_PELPB</name>
<sequence>MQSVLVLDFGSQYTQLIARRIRELGIYSEILPYNTTPESIREHNPKAIILSGGPTSVYDASAILPDDGIFSLGIPMLGICYGLQVIAKHFGGEVASSSKHEFGRAKIMVAQDNEPESPLFHDIPDSDVWMSHGDKVMQLPEGFRVTASSENSEMCAFESFGSKGALKIYALQFHPEVQHTLYGKQLLSNFLITIAGITPDWSSKSFIEHQLEEISRKAGKETVICGISGGVDSTVAAVMVGKAIGKQLHCVFVDNGLLRKNEAEKVMTFLSTLGLRVTLVDASDLFLKRLKTVASPEKKRKIIGRTFIQVFEEQMEQEKFLVQGTLYPDVIESVSVKGPSETIKSHHNVGGLPKRMKLKLIEPLRELFKDEVRAVGRELGIAEDILMRHPFPGPGLAVRVLGSVTKERLDILRDADEIFIEELKSTGLYQKVWQAFAVLLPVQSVGVMGDKRTYENVLALRAVESSDGMTADWAQLPHDFLARVSNRIINEVRGINRVAYDISSKPPATIEWE</sequence>
<dbReference type="EC" id="6.3.5.2" evidence="1"/>
<dbReference type="EMBL" id="CP001110">
    <property type="protein sequence ID" value="ACF44804.1"/>
    <property type="molecule type" value="Genomic_DNA"/>
</dbReference>
<dbReference type="RefSeq" id="WP_012509277.1">
    <property type="nucleotide sequence ID" value="NC_011060.1"/>
</dbReference>
<dbReference type="SMR" id="B4SFX7"/>
<dbReference type="STRING" id="324925.Ppha_2644"/>
<dbReference type="MEROPS" id="C26.957"/>
<dbReference type="KEGG" id="pph:Ppha_2644"/>
<dbReference type="eggNOG" id="COG0518">
    <property type="taxonomic scope" value="Bacteria"/>
</dbReference>
<dbReference type="eggNOG" id="COG0519">
    <property type="taxonomic scope" value="Bacteria"/>
</dbReference>
<dbReference type="HOGENOM" id="CLU_014340_0_5_10"/>
<dbReference type="OrthoDB" id="9802219at2"/>
<dbReference type="UniPathway" id="UPA00189">
    <property type="reaction ID" value="UER00296"/>
</dbReference>
<dbReference type="Proteomes" id="UP000002724">
    <property type="component" value="Chromosome"/>
</dbReference>
<dbReference type="GO" id="GO:0005829">
    <property type="term" value="C:cytosol"/>
    <property type="evidence" value="ECO:0007669"/>
    <property type="project" value="TreeGrafter"/>
</dbReference>
<dbReference type="GO" id="GO:0005524">
    <property type="term" value="F:ATP binding"/>
    <property type="evidence" value="ECO:0007669"/>
    <property type="project" value="UniProtKB-UniRule"/>
</dbReference>
<dbReference type="GO" id="GO:0003921">
    <property type="term" value="F:GMP synthase activity"/>
    <property type="evidence" value="ECO:0007669"/>
    <property type="project" value="InterPro"/>
</dbReference>
<dbReference type="CDD" id="cd01742">
    <property type="entry name" value="GATase1_GMP_Synthase"/>
    <property type="match status" value="1"/>
</dbReference>
<dbReference type="CDD" id="cd01997">
    <property type="entry name" value="GMP_synthase_C"/>
    <property type="match status" value="1"/>
</dbReference>
<dbReference type="FunFam" id="3.30.300.10:FF:000002">
    <property type="entry name" value="GMP synthase [glutamine-hydrolyzing]"/>
    <property type="match status" value="1"/>
</dbReference>
<dbReference type="FunFam" id="3.40.50.620:FF:000001">
    <property type="entry name" value="GMP synthase [glutamine-hydrolyzing]"/>
    <property type="match status" value="1"/>
</dbReference>
<dbReference type="FunFam" id="3.40.50.880:FF:000001">
    <property type="entry name" value="GMP synthase [glutamine-hydrolyzing]"/>
    <property type="match status" value="1"/>
</dbReference>
<dbReference type="Gene3D" id="3.30.300.10">
    <property type="match status" value="1"/>
</dbReference>
<dbReference type="Gene3D" id="3.40.50.880">
    <property type="match status" value="1"/>
</dbReference>
<dbReference type="Gene3D" id="3.40.50.620">
    <property type="entry name" value="HUPs"/>
    <property type="match status" value="1"/>
</dbReference>
<dbReference type="HAMAP" id="MF_00344">
    <property type="entry name" value="GMP_synthase"/>
    <property type="match status" value="1"/>
</dbReference>
<dbReference type="InterPro" id="IPR029062">
    <property type="entry name" value="Class_I_gatase-like"/>
</dbReference>
<dbReference type="InterPro" id="IPR017926">
    <property type="entry name" value="GATASE"/>
</dbReference>
<dbReference type="InterPro" id="IPR001674">
    <property type="entry name" value="GMP_synth_C"/>
</dbReference>
<dbReference type="InterPro" id="IPR004739">
    <property type="entry name" value="GMP_synth_GATase"/>
</dbReference>
<dbReference type="InterPro" id="IPR022955">
    <property type="entry name" value="GMP_synthase"/>
</dbReference>
<dbReference type="InterPro" id="IPR025777">
    <property type="entry name" value="GMPS_ATP_PPase_dom"/>
</dbReference>
<dbReference type="InterPro" id="IPR022310">
    <property type="entry name" value="NAD/GMP_synthase"/>
</dbReference>
<dbReference type="InterPro" id="IPR014729">
    <property type="entry name" value="Rossmann-like_a/b/a_fold"/>
</dbReference>
<dbReference type="NCBIfam" id="TIGR00884">
    <property type="entry name" value="guaA_Cterm"/>
    <property type="match status" value="1"/>
</dbReference>
<dbReference type="NCBIfam" id="TIGR00888">
    <property type="entry name" value="guaA_Nterm"/>
    <property type="match status" value="1"/>
</dbReference>
<dbReference type="NCBIfam" id="NF000848">
    <property type="entry name" value="PRK00074.1"/>
    <property type="match status" value="1"/>
</dbReference>
<dbReference type="PANTHER" id="PTHR11922:SF2">
    <property type="entry name" value="GMP SYNTHASE [GLUTAMINE-HYDROLYZING]"/>
    <property type="match status" value="1"/>
</dbReference>
<dbReference type="PANTHER" id="PTHR11922">
    <property type="entry name" value="GMP SYNTHASE-RELATED"/>
    <property type="match status" value="1"/>
</dbReference>
<dbReference type="Pfam" id="PF00117">
    <property type="entry name" value="GATase"/>
    <property type="match status" value="1"/>
</dbReference>
<dbReference type="Pfam" id="PF00958">
    <property type="entry name" value="GMP_synt_C"/>
    <property type="match status" value="1"/>
</dbReference>
<dbReference type="Pfam" id="PF02540">
    <property type="entry name" value="NAD_synthase"/>
    <property type="match status" value="1"/>
</dbReference>
<dbReference type="PRINTS" id="PR00096">
    <property type="entry name" value="GATASE"/>
</dbReference>
<dbReference type="SUPFAM" id="SSF52402">
    <property type="entry name" value="Adenine nucleotide alpha hydrolases-like"/>
    <property type="match status" value="1"/>
</dbReference>
<dbReference type="SUPFAM" id="SSF52317">
    <property type="entry name" value="Class I glutamine amidotransferase-like"/>
    <property type="match status" value="1"/>
</dbReference>
<dbReference type="SUPFAM" id="SSF54810">
    <property type="entry name" value="GMP synthetase C-terminal dimerisation domain"/>
    <property type="match status" value="1"/>
</dbReference>
<dbReference type="PROSITE" id="PS51273">
    <property type="entry name" value="GATASE_TYPE_1"/>
    <property type="match status" value="1"/>
</dbReference>
<dbReference type="PROSITE" id="PS51553">
    <property type="entry name" value="GMPS_ATP_PPASE"/>
    <property type="match status" value="1"/>
</dbReference>
<organism>
    <name type="scientific">Pelodictyon phaeoclathratiforme (strain DSM 5477 / BU-1)</name>
    <dbReference type="NCBI Taxonomy" id="324925"/>
    <lineage>
        <taxon>Bacteria</taxon>
        <taxon>Pseudomonadati</taxon>
        <taxon>Chlorobiota</taxon>
        <taxon>Chlorobiia</taxon>
        <taxon>Chlorobiales</taxon>
        <taxon>Chlorobiaceae</taxon>
        <taxon>Chlorobium/Pelodictyon group</taxon>
        <taxon>Pelodictyon</taxon>
    </lineage>
</organism>
<accession>B4SFX7</accession>
<evidence type="ECO:0000255" key="1">
    <source>
        <dbReference type="HAMAP-Rule" id="MF_00344"/>
    </source>
</evidence>
<gene>
    <name evidence="1" type="primary">guaA</name>
    <name type="ordered locus">Ppha_2644</name>
</gene>
<keyword id="KW-0067">ATP-binding</keyword>
<keyword id="KW-0315">Glutamine amidotransferase</keyword>
<keyword id="KW-0332">GMP biosynthesis</keyword>
<keyword id="KW-0436">Ligase</keyword>
<keyword id="KW-0547">Nucleotide-binding</keyword>
<keyword id="KW-0658">Purine biosynthesis</keyword>
<keyword id="KW-1185">Reference proteome</keyword>
<feature type="chain" id="PRO_1000120351" description="GMP synthase [glutamine-hydrolyzing]">
    <location>
        <begin position="1"/>
        <end position="513"/>
    </location>
</feature>
<feature type="domain" description="Glutamine amidotransferase type-1" evidence="1">
    <location>
        <begin position="3"/>
        <end position="200"/>
    </location>
</feature>
<feature type="domain" description="GMPS ATP-PPase" evidence="1">
    <location>
        <begin position="201"/>
        <end position="388"/>
    </location>
</feature>
<feature type="active site" description="Nucleophile" evidence="1">
    <location>
        <position position="80"/>
    </location>
</feature>
<feature type="active site" evidence="1">
    <location>
        <position position="174"/>
    </location>
</feature>
<feature type="active site" evidence="1">
    <location>
        <position position="176"/>
    </location>
</feature>
<feature type="binding site" evidence="1">
    <location>
        <begin position="228"/>
        <end position="234"/>
    </location>
    <ligand>
        <name>ATP</name>
        <dbReference type="ChEBI" id="CHEBI:30616"/>
    </ligand>
</feature>
<comment type="function">
    <text evidence="1">Catalyzes the synthesis of GMP from XMP.</text>
</comment>
<comment type="catalytic activity">
    <reaction evidence="1">
        <text>XMP + L-glutamine + ATP + H2O = GMP + L-glutamate + AMP + diphosphate + 2 H(+)</text>
        <dbReference type="Rhea" id="RHEA:11680"/>
        <dbReference type="ChEBI" id="CHEBI:15377"/>
        <dbReference type="ChEBI" id="CHEBI:15378"/>
        <dbReference type="ChEBI" id="CHEBI:29985"/>
        <dbReference type="ChEBI" id="CHEBI:30616"/>
        <dbReference type="ChEBI" id="CHEBI:33019"/>
        <dbReference type="ChEBI" id="CHEBI:57464"/>
        <dbReference type="ChEBI" id="CHEBI:58115"/>
        <dbReference type="ChEBI" id="CHEBI:58359"/>
        <dbReference type="ChEBI" id="CHEBI:456215"/>
        <dbReference type="EC" id="6.3.5.2"/>
    </reaction>
</comment>
<comment type="pathway">
    <text evidence="1">Purine metabolism; GMP biosynthesis; GMP from XMP (L-Gln route): step 1/1.</text>
</comment>
<comment type="subunit">
    <text evidence="1">Homodimer.</text>
</comment>
<proteinExistence type="inferred from homology"/>